<reference key="1">
    <citation type="journal article" date="2007" name="Genome Biol.">
        <title>Genome analysis and genome-wide proteomics of Thermococcus gammatolerans, the most radioresistant organism known amongst the Archaea.</title>
        <authorList>
            <person name="Zivanovic Y."/>
            <person name="Armengaud J."/>
            <person name="Lagorce A."/>
            <person name="Leplat C."/>
            <person name="Guerin P."/>
            <person name="Dutertre M."/>
            <person name="Anthouard V."/>
            <person name="Forterre P."/>
            <person name="Wincker P."/>
            <person name="Confalonieri F."/>
        </authorList>
    </citation>
    <scope>NUCLEOTIDE SEQUENCE [LARGE SCALE GENOMIC DNA]</scope>
    <source>
        <strain>DSM 15229 / JCM 11827 / EJ3</strain>
    </source>
</reference>
<sequence>MTKFIFVTGGVVSGLGKGITSASLGMLMKARGFRTTNIKIDPYLNYDAGTMNPYQHGEVFVLDDGGEVDLDLGNYERFLDTSLSFDHNITTGKVYSAVIEKERKGEYLGATVQVIPHITNEIKERIRRIARDYDVVIVEIGGTVGDIEGMPFLEAARQMQLEEGRENVAFVHVTYVPKLKVVGEQKTKPTQHSVKELRSLGIQPDAIVARSEEPLEESARRKISLFTNVPEEAVISAYDVEDTYEVPLMLEKEGLARYLVRRLGLPEREPDLEKWREMVEKYKSLDKEVEIAIVGKYVKLADSYLSIKEALKHSSVANDVKVKIRWIEAEDVERKGVKLLEGVDGIIVPGGFGARGSEGKMMAIRYARENDIPFLGICFGFQLTVVEFARNVLGLKGAHSTEIDPQTPYPVVDLMPEQRDLDRLGGTMRLGAYPVHIKPNTLAKRLYGREIVYERHRHRWEVNPDYIEKLESAGLVFSGIAGDDERRMEILELPDHSYFIATQFHPEFKSRPMNPAPVFRGLVRAARERKYGG</sequence>
<feature type="chain" id="PRO_1000214018" description="CTP synthase">
    <location>
        <begin position="1"/>
        <end position="533"/>
    </location>
</feature>
<feature type="domain" description="Glutamine amidotransferase type-1" evidence="1">
    <location>
        <begin position="290"/>
        <end position="532"/>
    </location>
</feature>
<feature type="region of interest" description="Amidoligase domain" evidence="1">
    <location>
        <begin position="1"/>
        <end position="265"/>
    </location>
</feature>
<feature type="active site" description="Nucleophile; for glutamine hydrolysis" evidence="1">
    <location>
        <position position="378"/>
    </location>
</feature>
<feature type="active site" evidence="1">
    <location>
        <position position="505"/>
    </location>
</feature>
<feature type="active site" evidence="1">
    <location>
        <position position="507"/>
    </location>
</feature>
<feature type="binding site" evidence="1">
    <location>
        <position position="13"/>
    </location>
    <ligand>
        <name>CTP</name>
        <dbReference type="ChEBI" id="CHEBI:37563"/>
        <note>allosteric inhibitor</note>
    </ligand>
</feature>
<feature type="binding site" evidence="1">
    <location>
        <position position="13"/>
    </location>
    <ligand>
        <name>UTP</name>
        <dbReference type="ChEBI" id="CHEBI:46398"/>
    </ligand>
</feature>
<feature type="binding site" evidence="1">
    <location>
        <begin position="14"/>
        <end position="19"/>
    </location>
    <ligand>
        <name>ATP</name>
        <dbReference type="ChEBI" id="CHEBI:30616"/>
    </ligand>
</feature>
<feature type="binding site" evidence="1">
    <location>
        <position position="54"/>
    </location>
    <ligand>
        <name>L-glutamine</name>
        <dbReference type="ChEBI" id="CHEBI:58359"/>
    </ligand>
</feature>
<feature type="binding site" evidence="1">
    <location>
        <position position="71"/>
    </location>
    <ligand>
        <name>ATP</name>
        <dbReference type="ChEBI" id="CHEBI:30616"/>
    </ligand>
</feature>
<feature type="binding site" evidence="1">
    <location>
        <position position="71"/>
    </location>
    <ligand>
        <name>Mg(2+)</name>
        <dbReference type="ChEBI" id="CHEBI:18420"/>
    </ligand>
</feature>
<feature type="binding site" evidence="1">
    <location>
        <position position="139"/>
    </location>
    <ligand>
        <name>Mg(2+)</name>
        <dbReference type="ChEBI" id="CHEBI:18420"/>
    </ligand>
</feature>
<feature type="binding site" evidence="1">
    <location>
        <begin position="146"/>
        <end position="148"/>
    </location>
    <ligand>
        <name>CTP</name>
        <dbReference type="ChEBI" id="CHEBI:37563"/>
        <note>allosteric inhibitor</note>
    </ligand>
</feature>
<feature type="binding site" evidence="1">
    <location>
        <begin position="186"/>
        <end position="191"/>
    </location>
    <ligand>
        <name>CTP</name>
        <dbReference type="ChEBI" id="CHEBI:37563"/>
        <note>allosteric inhibitor</note>
    </ligand>
</feature>
<feature type="binding site" evidence="1">
    <location>
        <begin position="186"/>
        <end position="191"/>
    </location>
    <ligand>
        <name>UTP</name>
        <dbReference type="ChEBI" id="CHEBI:46398"/>
    </ligand>
</feature>
<feature type="binding site" evidence="1">
    <location>
        <position position="222"/>
    </location>
    <ligand>
        <name>CTP</name>
        <dbReference type="ChEBI" id="CHEBI:37563"/>
        <note>allosteric inhibitor</note>
    </ligand>
</feature>
<feature type="binding site" evidence="1">
    <location>
        <position position="222"/>
    </location>
    <ligand>
        <name>UTP</name>
        <dbReference type="ChEBI" id="CHEBI:46398"/>
    </ligand>
</feature>
<feature type="binding site" evidence="1">
    <location>
        <position position="351"/>
    </location>
    <ligand>
        <name>L-glutamine</name>
        <dbReference type="ChEBI" id="CHEBI:58359"/>
    </ligand>
</feature>
<feature type="binding site" evidence="1">
    <location>
        <begin position="379"/>
        <end position="382"/>
    </location>
    <ligand>
        <name>L-glutamine</name>
        <dbReference type="ChEBI" id="CHEBI:58359"/>
    </ligand>
</feature>
<feature type="binding site" evidence="1">
    <location>
        <position position="402"/>
    </location>
    <ligand>
        <name>L-glutamine</name>
        <dbReference type="ChEBI" id="CHEBI:58359"/>
    </ligand>
</feature>
<feature type="binding site" evidence="1">
    <location>
        <position position="459"/>
    </location>
    <ligand>
        <name>L-glutamine</name>
        <dbReference type="ChEBI" id="CHEBI:58359"/>
    </ligand>
</feature>
<comment type="function">
    <text evidence="1">Catalyzes the ATP-dependent amination of UTP to CTP with either L-glutamine or ammonia as the source of nitrogen. Regulates intracellular CTP levels through interactions with the four ribonucleotide triphosphates.</text>
</comment>
<comment type="catalytic activity">
    <reaction evidence="1">
        <text>UTP + L-glutamine + ATP + H2O = CTP + L-glutamate + ADP + phosphate + 2 H(+)</text>
        <dbReference type="Rhea" id="RHEA:26426"/>
        <dbReference type="ChEBI" id="CHEBI:15377"/>
        <dbReference type="ChEBI" id="CHEBI:15378"/>
        <dbReference type="ChEBI" id="CHEBI:29985"/>
        <dbReference type="ChEBI" id="CHEBI:30616"/>
        <dbReference type="ChEBI" id="CHEBI:37563"/>
        <dbReference type="ChEBI" id="CHEBI:43474"/>
        <dbReference type="ChEBI" id="CHEBI:46398"/>
        <dbReference type="ChEBI" id="CHEBI:58359"/>
        <dbReference type="ChEBI" id="CHEBI:456216"/>
        <dbReference type="EC" id="6.3.4.2"/>
    </reaction>
</comment>
<comment type="catalytic activity">
    <reaction evidence="1">
        <text>L-glutamine + H2O = L-glutamate + NH4(+)</text>
        <dbReference type="Rhea" id="RHEA:15889"/>
        <dbReference type="ChEBI" id="CHEBI:15377"/>
        <dbReference type="ChEBI" id="CHEBI:28938"/>
        <dbReference type="ChEBI" id="CHEBI:29985"/>
        <dbReference type="ChEBI" id="CHEBI:58359"/>
    </reaction>
</comment>
<comment type="catalytic activity">
    <reaction evidence="1">
        <text>UTP + NH4(+) + ATP = CTP + ADP + phosphate + 2 H(+)</text>
        <dbReference type="Rhea" id="RHEA:16597"/>
        <dbReference type="ChEBI" id="CHEBI:15378"/>
        <dbReference type="ChEBI" id="CHEBI:28938"/>
        <dbReference type="ChEBI" id="CHEBI:30616"/>
        <dbReference type="ChEBI" id="CHEBI:37563"/>
        <dbReference type="ChEBI" id="CHEBI:43474"/>
        <dbReference type="ChEBI" id="CHEBI:46398"/>
        <dbReference type="ChEBI" id="CHEBI:456216"/>
    </reaction>
</comment>
<comment type="activity regulation">
    <text evidence="1">Allosterically activated by GTP, when glutamine is the substrate; GTP has no effect on the reaction when ammonia is the substrate. The allosteric effector GTP functions by stabilizing the protein conformation that binds the tetrahedral intermediate(s) formed during glutamine hydrolysis. Inhibited by the product CTP, via allosteric rather than competitive inhibition.</text>
</comment>
<comment type="pathway">
    <text evidence="1">Pyrimidine metabolism; CTP biosynthesis via de novo pathway; CTP from UDP: step 2/2.</text>
</comment>
<comment type="subunit">
    <text evidence="1">Homotetramer.</text>
</comment>
<comment type="miscellaneous">
    <text evidence="1">CTPSs have evolved a hybrid strategy for distinguishing between UTP and CTP. The overlapping regions of the product feedback inhibitory and substrate sites recognize a common feature in both compounds, the triphosphate moiety. To differentiate isosteric substrate and product pyrimidine rings, an additional pocket far from the expected kinase/ligase catalytic site, specifically recognizes the cytosine and ribose portions of the product inhibitor.</text>
</comment>
<comment type="similarity">
    <text evidence="1">Belongs to the CTP synthase family.</text>
</comment>
<proteinExistence type="inferred from homology"/>
<organism>
    <name type="scientific">Thermococcus gammatolerans (strain DSM 15229 / JCM 11827 / EJ3)</name>
    <dbReference type="NCBI Taxonomy" id="593117"/>
    <lineage>
        <taxon>Archaea</taxon>
        <taxon>Methanobacteriati</taxon>
        <taxon>Methanobacteriota</taxon>
        <taxon>Thermococci</taxon>
        <taxon>Thermococcales</taxon>
        <taxon>Thermococcaceae</taxon>
        <taxon>Thermococcus</taxon>
    </lineage>
</organism>
<dbReference type="EC" id="6.3.4.2" evidence="1"/>
<dbReference type="EMBL" id="CP001398">
    <property type="protein sequence ID" value="ACS34163.1"/>
    <property type="molecule type" value="Genomic_DNA"/>
</dbReference>
<dbReference type="RefSeq" id="WP_015859274.1">
    <property type="nucleotide sequence ID" value="NC_012804.1"/>
</dbReference>
<dbReference type="SMR" id="C5A7F1"/>
<dbReference type="STRING" id="593117.TGAM_1661"/>
<dbReference type="MEROPS" id="C26.964"/>
<dbReference type="PaxDb" id="593117-TGAM_1661"/>
<dbReference type="GeneID" id="7987571"/>
<dbReference type="KEGG" id="tga:TGAM_1661"/>
<dbReference type="PATRIC" id="fig|593117.10.peg.1667"/>
<dbReference type="eggNOG" id="arCOG00063">
    <property type="taxonomic scope" value="Archaea"/>
</dbReference>
<dbReference type="HOGENOM" id="CLU_011675_5_0_2"/>
<dbReference type="OrthoDB" id="52769at2157"/>
<dbReference type="UniPathway" id="UPA00159">
    <property type="reaction ID" value="UER00277"/>
</dbReference>
<dbReference type="Proteomes" id="UP000001488">
    <property type="component" value="Chromosome"/>
</dbReference>
<dbReference type="GO" id="GO:0005524">
    <property type="term" value="F:ATP binding"/>
    <property type="evidence" value="ECO:0007669"/>
    <property type="project" value="UniProtKB-KW"/>
</dbReference>
<dbReference type="GO" id="GO:0003883">
    <property type="term" value="F:CTP synthase activity"/>
    <property type="evidence" value="ECO:0007669"/>
    <property type="project" value="UniProtKB-UniRule"/>
</dbReference>
<dbReference type="GO" id="GO:0004359">
    <property type="term" value="F:glutaminase activity"/>
    <property type="evidence" value="ECO:0007669"/>
    <property type="project" value="RHEA"/>
</dbReference>
<dbReference type="GO" id="GO:0042802">
    <property type="term" value="F:identical protein binding"/>
    <property type="evidence" value="ECO:0007669"/>
    <property type="project" value="TreeGrafter"/>
</dbReference>
<dbReference type="GO" id="GO:0046872">
    <property type="term" value="F:metal ion binding"/>
    <property type="evidence" value="ECO:0007669"/>
    <property type="project" value="UniProtKB-KW"/>
</dbReference>
<dbReference type="GO" id="GO:0044210">
    <property type="term" value="P:'de novo' CTP biosynthetic process"/>
    <property type="evidence" value="ECO:0007669"/>
    <property type="project" value="UniProtKB-UniRule"/>
</dbReference>
<dbReference type="GO" id="GO:0019856">
    <property type="term" value="P:pyrimidine nucleobase biosynthetic process"/>
    <property type="evidence" value="ECO:0007669"/>
    <property type="project" value="TreeGrafter"/>
</dbReference>
<dbReference type="CDD" id="cd03113">
    <property type="entry name" value="CTPS_N"/>
    <property type="match status" value="1"/>
</dbReference>
<dbReference type="CDD" id="cd01746">
    <property type="entry name" value="GATase1_CTP_Synthase"/>
    <property type="match status" value="1"/>
</dbReference>
<dbReference type="FunFam" id="3.40.50.300:FF:000009">
    <property type="entry name" value="CTP synthase"/>
    <property type="match status" value="1"/>
</dbReference>
<dbReference type="FunFam" id="3.40.50.880:FF:000002">
    <property type="entry name" value="CTP synthase"/>
    <property type="match status" value="1"/>
</dbReference>
<dbReference type="Gene3D" id="3.40.50.880">
    <property type="match status" value="1"/>
</dbReference>
<dbReference type="Gene3D" id="3.40.50.300">
    <property type="entry name" value="P-loop containing nucleotide triphosphate hydrolases"/>
    <property type="match status" value="1"/>
</dbReference>
<dbReference type="HAMAP" id="MF_01227">
    <property type="entry name" value="PyrG"/>
    <property type="match status" value="1"/>
</dbReference>
<dbReference type="InterPro" id="IPR029062">
    <property type="entry name" value="Class_I_gatase-like"/>
</dbReference>
<dbReference type="InterPro" id="IPR004468">
    <property type="entry name" value="CTP_synthase"/>
</dbReference>
<dbReference type="InterPro" id="IPR017456">
    <property type="entry name" value="CTP_synthase_N"/>
</dbReference>
<dbReference type="InterPro" id="IPR017926">
    <property type="entry name" value="GATASE"/>
</dbReference>
<dbReference type="InterPro" id="IPR033828">
    <property type="entry name" value="GATase1_CTP_Synthase"/>
</dbReference>
<dbReference type="InterPro" id="IPR027417">
    <property type="entry name" value="P-loop_NTPase"/>
</dbReference>
<dbReference type="NCBIfam" id="NF003792">
    <property type="entry name" value="PRK05380.1"/>
    <property type="match status" value="1"/>
</dbReference>
<dbReference type="NCBIfam" id="TIGR00337">
    <property type="entry name" value="PyrG"/>
    <property type="match status" value="1"/>
</dbReference>
<dbReference type="PANTHER" id="PTHR11550">
    <property type="entry name" value="CTP SYNTHASE"/>
    <property type="match status" value="1"/>
</dbReference>
<dbReference type="PANTHER" id="PTHR11550:SF0">
    <property type="entry name" value="CTP SYNTHASE-RELATED"/>
    <property type="match status" value="1"/>
</dbReference>
<dbReference type="Pfam" id="PF06418">
    <property type="entry name" value="CTP_synth_N"/>
    <property type="match status" value="1"/>
</dbReference>
<dbReference type="Pfam" id="PF00117">
    <property type="entry name" value="GATase"/>
    <property type="match status" value="1"/>
</dbReference>
<dbReference type="SUPFAM" id="SSF52317">
    <property type="entry name" value="Class I glutamine amidotransferase-like"/>
    <property type="match status" value="1"/>
</dbReference>
<dbReference type="SUPFAM" id="SSF52540">
    <property type="entry name" value="P-loop containing nucleoside triphosphate hydrolases"/>
    <property type="match status" value="1"/>
</dbReference>
<dbReference type="PROSITE" id="PS51273">
    <property type="entry name" value="GATASE_TYPE_1"/>
    <property type="match status" value="1"/>
</dbReference>
<accession>C5A7F1</accession>
<name>PYRG_THEGJ</name>
<evidence type="ECO:0000255" key="1">
    <source>
        <dbReference type="HAMAP-Rule" id="MF_01227"/>
    </source>
</evidence>
<protein>
    <recommendedName>
        <fullName evidence="1">CTP synthase</fullName>
        <ecNumber evidence="1">6.3.4.2</ecNumber>
    </recommendedName>
    <alternativeName>
        <fullName evidence="1">Cytidine 5'-triphosphate synthase</fullName>
    </alternativeName>
    <alternativeName>
        <fullName evidence="1">Cytidine triphosphate synthetase</fullName>
        <shortName evidence="1">CTP synthetase</shortName>
        <shortName evidence="1">CTPS</shortName>
    </alternativeName>
    <alternativeName>
        <fullName evidence="1">UTP--ammonia ligase</fullName>
    </alternativeName>
</protein>
<gene>
    <name evidence="1" type="primary">pyrG</name>
    <name type="ordered locus">TGAM_1661</name>
</gene>
<keyword id="KW-0067">ATP-binding</keyword>
<keyword id="KW-0315">Glutamine amidotransferase</keyword>
<keyword id="KW-0436">Ligase</keyword>
<keyword id="KW-0460">Magnesium</keyword>
<keyword id="KW-0479">Metal-binding</keyword>
<keyword id="KW-0547">Nucleotide-binding</keyword>
<keyword id="KW-0665">Pyrimidine biosynthesis</keyword>
<keyword id="KW-1185">Reference proteome</keyword>